<feature type="chain" id="PRO_0000183891" description="Cytochrome c oxidase subunit 3">
    <location>
        <begin position="1"/>
        <end position="233"/>
    </location>
</feature>
<feature type="transmembrane region" description="Helical" evidence="1">
    <location>
        <begin position="62"/>
        <end position="82"/>
    </location>
</feature>
<feature type="transmembrane region" description="Helical" evidence="1">
    <location>
        <begin position="98"/>
        <end position="118"/>
    </location>
</feature>
<feature type="transmembrane region" description="Helical" evidence="1">
    <location>
        <begin position="135"/>
        <end position="155"/>
    </location>
</feature>
<feature type="transmembrane region" description="Helical" evidence="1">
    <location>
        <begin position="172"/>
        <end position="192"/>
    </location>
</feature>
<feature type="sequence conflict" description="In Ref. 1." evidence="2" ref="1">
    <original>MTSPMGPTARDFW</original>
    <variation>MARPPGGFL</variation>
    <location>
        <begin position="1"/>
        <end position="13"/>
    </location>
</feature>
<feature type="sequence conflict" description="In Ref. 1; CAA37778." evidence="2" ref="1">
    <original>SFVM</original>
    <variation>R</variation>
    <location>
        <begin position="114"/>
        <end position="117"/>
    </location>
</feature>
<evidence type="ECO:0000255" key="1"/>
<evidence type="ECO:0000305" key="2"/>
<reference key="1">
    <citation type="journal article" date="1993" name="Biochem. Mol. Biol. Int.">
        <title>Characterization of a cta/CDE operon-like genomic region encoding subunits I-III of the cytochrome c oxidase of the cyanobacterium Synechocystis PCC 6803.</title>
        <authorList>
            <person name="Alge D."/>
            <person name="Peschek G.A."/>
        </authorList>
    </citation>
    <scope>NUCLEOTIDE SEQUENCE [GENOMIC DNA]</scope>
</reference>
<reference key="2">
    <citation type="journal article" date="1996" name="DNA Res.">
        <title>Sequence analysis of the genome of the unicellular cyanobacterium Synechocystis sp. strain PCC6803. II. Sequence determination of the entire genome and assignment of potential protein-coding regions.</title>
        <authorList>
            <person name="Kaneko T."/>
            <person name="Sato S."/>
            <person name="Kotani H."/>
            <person name="Tanaka A."/>
            <person name="Asamizu E."/>
            <person name="Nakamura Y."/>
            <person name="Miyajima N."/>
            <person name="Hirosawa M."/>
            <person name="Sugiura M."/>
            <person name="Sasamoto S."/>
            <person name="Kimura T."/>
            <person name="Hosouchi T."/>
            <person name="Matsuno A."/>
            <person name="Muraki A."/>
            <person name="Nakazaki N."/>
            <person name="Naruo K."/>
            <person name="Okumura S."/>
            <person name="Shimpo S."/>
            <person name="Takeuchi C."/>
            <person name="Wada T."/>
            <person name="Watanabe A."/>
            <person name="Yamada M."/>
            <person name="Yasuda M."/>
            <person name="Tabata S."/>
        </authorList>
    </citation>
    <scope>NUCLEOTIDE SEQUENCE [LARGE SCALE GENOMIC DNA]</scope>
    <source>
        <strain>ATCC 27184 / PCC 6803 / Kazusa</strain>
    </source>
</reference>
<dbReference type="EC" id="7.1.1.9"/>
<dbReference type="EMBL" id="X53746">
    <property type="protein sequence ID" value="CAA37778.1"/>
    <property type="molecule type" value="Genomic_DNA"/>
</dbReference>
<dbReference type="EMBL" id="BA000022">
    <property type="protein sequence ID" value="BAA17290.1"/>
    <property type="molecule type" value="Genomic_DNA"/>
</dbReference>
<dbReference type="PIR" id="S77443">
    <property type="entry name" value="S77443"/>
</dbReference>
<dbReference type="SMR" id="Q06475"/>
<dbReference type="FunCoup" id="Q06475">
    <property type="interactions" value="169"/>
</dbReference>
<dbReference type="STRING" id="1148.gene:10498153"/>
<dbReference type="PaxDb" id="1148-1652368"/>
<dbReference type="EnsemblBacteria" id="BAA17290">
    <property type="protein sequence ID" value="BAA17290"/>
    <property type="gene ID" value="BAA17290"/>
</dbReference>
<dbReference type="KEGG" id="syn:slr1138"/>
<dbReference type="eggNOG" id="COG1845">
    <property type="taxonomic scope" value="Bacteria"/>
</dbReference>
<dbReference type="InParanoid" id="Q06475"/>
<dbReference type="PhylomeDB" id="Q06475"/>
<dbReference type="Proteomes" id="UP000001425">
    <property type="component" value="Chromosome"/>
</dbReference>
<dbReference type="GO" id="GO:0005886">
    <property type="term" value="C:plasma membrane"/>
    <property type="evidence" value="ECO:0007669"/>
    <property type="project" value="UniProtKB-SubCell"/>
</dbReference>
<dbReference type="GO" id="GO:0004129">
    <property type="term" value="F:cytochrome-c oxidase activity"/>
    <property type="evidence" value="ECO:0007669"/>
    <property type="project" value="UniProtKB-EC"/>
</dbReference>
<dbReference type="GO" id="GO:0019646">
    <property type="term" value="P:aerobic electron transport chain"/>
    <property type="evidence" value="ECO:0007669"/>
    <property type="project" value="InterPro"/>
</dbReference>
<dbReference type="GO" id="GO:0009060">
    <property type="term" value="P:aerobic respiration"/>
    <property type="evidence" value="ECO:0000318"/>
    <property type="project" value="GO_Central"/>
</dbReference>
<dbReference type="CDD" id="cd00386">
    <property type="entry name" value="Heme_Cu_Oxidase_III_like"/>
    <property type="match status" value="1"/>
</dbReference>
<dbReference type="FunFam" id="1.20.120.80:FF:000001">
    <property type="entry name" value="Cytochrome (Ubi)quinol oxidase subunit III"/>
    <property type="match status" value="1"/>
</dbReference>
<dbReference type="Gene3D" id="1.20.120.80">
    <property type="entry name" value="Cytochrome c oxidase, subunit III, four-helix bundle"/>
    <property type="match status" value="1"/>
</dbReference>
<dbReference type="InterPro" id="IPR024791">
    <property type="entry name" value="Cyt_c/ubiquinol_Oxase_su3"/>
</dbReference>
<dbReference type="InterPro" id="IPR000298">
    <property type="entry name" value="Cyt_c_oxidase-like_su3"/>
</dbReference>
<dbReference type="InterPro" id="IPR035973">
    <property type="entry name" value="Cyt_c_oxidase_su3-like_sf"/>
</dbReference>
<dbReference type="InterPro" id="IPR013833">
    <property type="entry name" value="Cyt_c_oxidase_su3_a-hlx"/>
</dbReference>
<dbReference type="PANTHER" id="PTHR11403:SF2">
    <property type="entry name" value="CYTOCHROME BO(3) UBIQUINOL OXIDASE SUBUNIT 3"/>
    <property type="match status" value="1"/>
</dbReference>
<dbReference type="PANTHER" id="PTHR11403">
    <property type="entry name" value="CYTOCHROME C OXIDASE SUBUNIT III"/>
    <property type="match status" value="1"/>
</dbReference>
<dbReference type="Pfam" id="PF00510">
    <property type="entry name" value="COX3"/>
    <property type="match status" value="1"/>
</dbReference>
<dbReference type="SUPFAM" id="SSF81452">
    <property type="entry name" value="Cytochrome c oxidase subunit III-like"/>
    <property type="match status" value="1"/>
</dbReference>
<dbReference type="PROSITE" id="PS50253">
    <property type="entry name" value="COX3"/>
    <property type="match status" value="1"/>
</dbReference>
<comment type="catalytic activity">
    <reaction>
        <text>4 Fe(II)-[cytochrome c] + O2 + 8 H(+)(in) = 4 Fe(III)-[cytochrome c] + 2 H2O + 4 H(+)(out)</text>
        <dbReference type="Rhea" id="RHEA:11436"/>
        <dbReference type="Rhea" id="RHEA-COMP:10350"/>
        <dbReference type="Rhea" id="RHEA-COMP:14399"/>
        <dbReference type="ChEBI" id="CHEBI:15377"/>
        <dbReference type="ChEBI" id="CHEBI:15378"/>
        <dbReference type="ChEBI" id="CHEBI:15379"/>
        <dbReference type="ChEBI" id="CHEBI:29033"/>
        <dbReference type="ChEBI" id="CHEBI:29034"/>
        <dbReference type="EC" id="7.1.1.9"/>
    </reaction>
</comment>
<comment type="subcellular location">
    <subcellularLocation>
        <location>Cell membrane</location>
        <topology>Multi-pass membrane protein</topology>
    </subcellularLocation>
</comment>
<comment type="similarity">
    <text evidence="2">Belongs to the cytochrome c oxidase subunit 3 family.</text>
</comment>
<sequence>MTSPMGPTARDFWQNSRNSATIQRLIVSPMQTTALSSDLNSTYTPGEAHGHHGHPDLRMFGVVLFLVAESAIFLGLFTAYLIYRSVMPAWPPEGTPELELLLPGVNSIILISSSFVMHKGQAAIRNNDNAGLQKWFGITAAMGIIFLAGQMYEYFHLEMGLTTNLFASCFYVLTGFHGLHVTFGLLLILSVLWRSRQPGHYSRTSHFGVEAAELYWHFVDVVWIVLFILVYLL</sequence>
<name>COX3_SYNY3</name>
<proteinExistence type="inferred from homology"/>
<organism>
    <name type="scientific">Synechocystis sp. (strain ATCC 27184 / PCC 6803 / Kazusa)</name>
    <dbReference type="NCBI Taxonomy" id="1111708"/>
    <lineage>
        <taxon>Bacteria</taxon>
        <taxon>Bacillati</taxon>
        <taxon>Cyanobacteriota</taxon>
        <taxon>Cyanophyceae</taxon>
        <taxon>Synechococcales</taxon>
        <taxon>Merismopediaceae</taxon>
        <taxon>Synechocystis</taxon>
    </lineage>
</organism>
<keyword id="KW-1003">Cell membrane</keyword>
<keyword id="KW-0472">Membrane</keyword>
<keyword id="KW-1185">Reference proteome</keyword>
<keyword id="KW-1278">Translocase</keyword>
<keyword id="KW-0812">Transmembrane</keyword>
<keyword id="KW-1133">Transmembrane helix</keyword>
<accession>Q06475</accession>
<accession>P73262</accession>
<protein>
    <recommendedName>
        <fullName>Cytochrome c oxidase subunit 3</fullName>
        <ecNumber>7.1.1.9</ecNumber>
    </recommendedName>
    <alternativeName>
        <fullName>Cytochrome aa3 subunit 3</fullName>
    </alternativeName>
    <alternativeName>
        <fullName>Cytochrome c oxidase polypeptide III</fullName>
    </alternativeName>
    <alternativeName>
        <fullName>Oxidase aa(3) subunit 3</fullName>
    </alternativeName>
</protein>
<gene>
    <name type="primary">ctaE</name>
    <name type="ordered locus">slr1138</name>
</gene>